<accession>B0RU72</accession>
<gene>
    <name evidence="1" type="primary">rplN</name>
    <name type="ordered locus">xcc-b100_3449</name>
</gene>
<dbReference type="EMBL" id="AM920689">
    <property type="protein sequence ID" value="CAP52814.1"/>
    <property type="molecule type" value="Genomic_DNA"/>
</dbReference>
<dbReference type="SMR" id="B0RU72"/>
<dbReference type="KEGG" id="xca:xcc-b100_3449"/>
<dbReference type="HOGENOM" id="CLU_095071_2_1_6"/>
<dbReference type="Proteomes" id="UP000001188">
    <property type="component" value="Chromosome"/>
</dbReference>
<dbReference type="GO" id="GO:0022625">
    <property type="term" value="C:cytosolic large ribosomal subunit"/>
    <property type="evidence" value="ECO:0007669"/>
    <property type="project" value="TreeGrafter"/>
</dbReference>
<dbReference type="GO" id="GO:0070180">
    <property type="term" value="F:large ribosomal subunit rRNA binding"/>
    <property type="evidence" value="ECO:0007669"/>
    <property type="project" value="TreeGrafter"/>
</dbReference>
<dbReference type="GO" id="GO:0003735">
    <property type="term" value="F:structural constituent of ribosome"/>
    <property type="evidence" value="ECO:0007669"/>
    <property type="project" value="InterPro"/>
</dbReference>
<dbReference type="GO" id="GO:0006412">
    <property type="term" value="P:translation"/>
    <property type="evidence" value="ECO:0007669"/>
    <property type="project" value="UniProtKB-UniRule"/>
</dbReference>
<dbReference type="CDD" id="cd00337">
    <property type="entry name" value="Ribosomal_uL14"/>
    <property type="match status" value="1"/>
</dbReference>
<dbReference type="FunFam" id="2.40.150.20:FF:000001">
    <property type="entry name" value="50S ribosomal protein L14"/>
    <property type="match status" value="1"/>
</dbReference>
<dbReference type="Gene3D" id="2.40.150.20">
    <property type="entry name" value="Ribosomal protein L14"/>
    <property type="match status" value="1"/>
</dbReference>
<dbReference type="HAMAP" id="MF_01367">
    <property type="entry name" value="Ribosomal_uL14"/>
    <property type="match status" value="1"/>
</dbReference>
<dbReference type="InterPro" id="IPR000218">
    <property type="entry name" value="Ribosomal_uL14"/>
</dbReference>
<dbReference type="InterPro" id="IPR005745">
    <property type="entry name" value="Ribosomal_uL14_bac-type"/>
</dbReference>
<dbReference type="InterPro" id="IPR019972">
    <property type="entry name" value="Ribosomal_uL14_CS"/>
</dbReference>
<dbReference type="InterPro" id="IPR036853">
    <property type="entry name" value="Ribosomal_uL14_sf"/>
</dbReference>
<dbReference type="NCBIfam" id="TIGR01067">
    <property type="entry name" value="rplN_bact"/>
    <property type="match status" value="1"/>
</dbReference>
<dbReference type="PANTHER" id="PTHR11761">
    <property type="entry name" value="50S/60S RIBOSOMAL PROTEIN L14/L23"/>
    <property type="match status" value="1"/>
</dbReference>
<dbReference type="PANTHER" id="PTHR11761:SF3">
    <property type="entry name" value="LARGE RIBOSOMAL SUBUNIT PROTEIN UL14M"/>
    <property type="match status" value="1"/>
</dbReference>
<dbReference type="Pfam" id="PF00238">
    <property type="entry name" value="Ribosomal_L14"/>
    <property type="match status" value="1"/>
</dbReference>
<dbReference type="SMART" id="SM01374">
    <property type="entry name" value="Ribosomal_L14"/>
    <property type="match status" value="1"/>
</dbReference>
<dbReference type="SUPFAM" id="SSF50193">
    <property type="entry name" value="Ribosomal protein L14"/>
    <property type="match status" value="1"/>
</dbReference>
<dbReference type="PROSITE" id="PS00049">
    <property type="entry name" value="RIBOSOMAL_L14"/>
    <property type="match status" value="1"/>
</dbReference>
<protein>
    <recommendedName>
        <fullName evidence="1">Large ribosomal subunit protein uL14</fullName>
    </recommendedName>
    <alternativeName>
        <fullName evidence="2">50S ribosomal protein L14</fullName>
    </alternativeName>
</protein>
<proteinExistence type="inferred from homology"/>
<name>RL14_XANCB</name>
<reference key="1">
    <citation type="journal article" date="2008" name="J. Biotechnol.">
        <title>The genome of Xanthomonas campestris pv. campestris B100 and its use for the reconstruction of metabolic pathways involved in xanthan biosynthesis.</title>
        <authorList>
            <person name="Vorhoelter F.-J."/>
            <person name="Schneiker S."/>
            <person name="Goesmann A."/>
            <person name="Krause L."/>
            <person name="Bekel T."/>
            <person name="Kaiser O."/>
            <person name="Linke B."/>
            <person name="Patschkowski T."/>
            <person name="Rueckert C."/>
            <person name="Schmid J."/>
            <person name="Sidhu V.K."/>
            <person name="Sieber V."/>
            <person name="Tauch A."/>
            <person name="Watt S.A."/>
            <person name="Weisshaar B."/>
            <person name="Becker A."/>
            <person name="Niehaus K."/>
            <person name="Puehler A."/>
        </authorList>
    </citation>
    <scope>NUCLEOTIDE SEQUENCE [LARGE SCALE GENOMIC DNA]</scope>
    <source>
        <strain>B100</strain>
    </source>
</reference>
<comment type="function">
    <text evidence="1">Binds to 23S rRNA. Forms part of two intersubunit bridges in the 70S ribosome.</text>
</comment>
<comment type="subunit">
    <text evidence="1">Part of the 50S ribosomal subunit. Forms a cluster with proteins L3 and L19. In the 70S ribosome, L14 and L19 interact and together make contacts with the 16S rRNA in bridges B5 and B8.</text>
</comment>
<comment type="similarity">
    <text evidence="1">Belongs to the universal ribosomal protein uL14 family.</text>
</comment>
<organism>
    <name type="scientific">Xanthomonas campestris pv. campestris (strain B100)</name>
    <dbReference type="NCBI Taxonomy" id="509169"/>
    <lineage>
        <taxon>Bacteria</taxon>
        <taxon>Pseudomonadati</taxon>
        <taxon>Pseudomonadota</taxon>
        <taxon>Gammaproteobacteria</taxon>
        <taxon>Lysobacterales</taxon>
        <taxon>Lysobacteraceae</taxon>
        <taxon>Xanthomonas</taxon>
    </lineage>
</organism>
<keyword id="KW-0687">Ribonucleoprotein</keyword>
<keyword id="KW-0689">Ribosomal protein</keyword>
<keyword id="KW-0694">RNA-binding</keyword>
<keyword id="KW-0699">rRNA-binding</keyword>
<sequence length="122" mass="13524">MIQMQSYLDVADNSGAKEVMCIKVLGGSKRRYAHIGDIIKVTVKDAIPRGKVKKGEVYDAVVVRTRKGVRRPDGSLIRFDGNAAVLLNNKQEPIGTRIFGPVTRELRSEKFMKIVSLAPEVL</sequence>
<evidence type="ECO:0000255" key="1">
    <source>
        <dbReference type="HAMAP-Rule" id="MF_01367"/>
    </source>
</evidence>
<evidence type="ECO:0000305" key="2"/>
<feature type="chain" id="PRO_1000144351" description="Large ribosomal subunit protein uL14">
    <location>
        <begin position="1"/>
        <end position="122"/>
    </location>
</feature>